<sequence length="291" mass="31159">MPNLKDLKNRIASVKSTRKITKAMQMVAAAKLRRAQESAEAARPYAERFNAVMAGLAASVGGSDSAPLLLRGTGSDQVHLLVVMTAERGLCGGFNSNIAKLARVRANELLAKGKTVKILTVGKKGRDAMKRDFAANMVGHVDLSGIKALGYANAQDIARDVLGRFDAGEFDVATIFYAKFQNVVTQLPTAQQIIPAAFEAEGESDEVALFDYEPSEEAILADLLPRGVATQIFSALLENGASEQGARMSAMDNATRNAGEMIDKLTIEFNRSRQAVITNELIEIISGAEAL</sequence>
<proteinExistence type="inferred from homology"/>
<keyword id="KW-0066">ATP synthesis</keyword>
<keyword id="KW-0997">Cell inner membrane</keyword>
<keyword id="KW-1003">Cell membrane</keyword>
<keyword id="KW-0139">CF(1)</keyword>
<keyword id="KW-0375">Hydrogen ion transport</keyword>
<keyword id="KW-0406">Ion transport</keyword>
<keyword id="KW-0472">Membrane</keyword>
<keyword id="KW-1185">Reference proteome</keyword>
<keyword id="KW-0813">Transport</keyword>
<gene>
    <name evidence="1" type="primary">atpG</name>
    <name type="ordered locus">SPO3163</name>
</gene>
<organism>
    <name type="scientific">Ruegeria pomeroyi (strain ATCC 700808 / DSM 15171 / DSS-3)</name>
    <name type="common">Silicibacter pomeroyi</name>
    <dbReference type="NCBI Taxonomy" id="246200"/>
    <lineage>
        <taxon>Bacteria</taxon>
        <taxon>Pseudomonadati</taxon>
        <taxon>Pseudomonadota</taxon>
        <taxon>Alphaproteobacteria</taxon>
        <taxon>Rhodobacterales</taxon>
        <taxon>Roseobacteraceae</taxon>
        <taxon>Ruegeria</taxon>
    </lineage>
</organism>
<comment type="function">
    <text evidence="1">Produces ATP from ADP in the presence of a proton gradient across the membrane. The gamma chain is believed to be important in regulating ATPase activity and the flow of protons through the CF(0) complex.</text>
</comment>
<comment type="subunit">
    <text evidence="1">F-type ATPases have 2 components, CF(1) - the catalytic core - and CF(0) - the membrane proton channel. CF(1) has five subunits: alpha(3), beta(3), gamma(1), delta(1), epsilon(1). CF(0) has three main subunits: a, b and c.</text>
</comment>
<comment type="subcellular location">
    <subcellularLocation>
        <location evidence="1">Cell inner membrane</location>
        <topology evidence="1">Peripheral membrane protein</topology>
    </subcellularLocation>
</comment>
<comment type="similarity">
    <text evidence="1">Belongs to the ATPase gamma chain family.</text>
</comment>
<dbReference type="EMBL" id="CP000031">
    <property type="protein sequence ID" value="AAV96398.1"/>
    <property type="molecule type" value="Genomic_DNA"/>
</dbReference>
<dbReference type="RefSeq" id="WP_011048853.1">
    <property type="nucleotide sequence ID" value="NC_003911.12"/>
</dbReference>
<dbReference type="SMR" id="Q5LNP0"/>
<dbReference type="STRING" id="246200.SPO3163"/>
<dbReference type="PaxDb" id="246200-SPO3163"/>
<dbReference type="KEGG" id="sil:SPO3163"/>
<dbReference type="eggNOG" id="COG0224">
    <property type="taxonomic scope" value="Bacteria"/>
</dbReference>
<dbReference type="HOGENOM" id="CLU_050669_0_1_5"/>
<dbReference type="OrthoDB" id="9812769at2"/>
<dbReference type="Proteomes" id="UP000001023">
    <property type="component" value="Chromosome"/>
</dbReference>
<dbReference type="GO" id="GO:0005886">
    <property type="term" value="C:plasma membrane"/>
    <property type="evidence" value="ECO:0007669"/>
    <property type="project" value="UniProtKB-SubCell"/>
</dbReference>
<dbReference type="GO" id="GO:0045259">
    <property type="term" value="C:proton-transporting ATP synthase complex"/>
    <property type="evidence" value="ECO:0007669"/>
    <property type="project" value="UniProtKB-KW"/>
</dbReference>
<dbReference type="GO" id="GO:0005524">
    <property type="term" value="F:ATP binding"/>
    <property type="evidence" value="ECO:0007669"/>
    <property type="project" value="UniProtKB-UniRule"/>
</dbReference>
<dbReference type="GO" id="GO:0046933">
    <property type="term" value="F:proton-transporting ATP synthase activity, rotational mechanism"/>
    <property type="evidence" value="ECO:0007669"/>
    <property type="project" value="UniProtKB-UniRule"/>
</dbReference>
<dbReference type="GO" id="GO:0042777">
    <property type="term" value="P:proton motive force-driven plasma membrane ATP synthesis"/>
    <property type="evidence" value="ECO:0007669"/>
    <property type="project" value="UniProtKB-UniRule"/>
</dbReference>
<dbReference type="CDD" id="cd12151">
    <property type="entry name" value="F1-ATPase_gamma"/>
    <property type="match status" value="1"/>
</dbReference>
<dbReference type="FunFam" id="1.10.287.80:FF:000001">
    <property type="entry name" value="ATP synthase gamma chain"/>
    <property type="match status" value="1"/>
</dbReference>
<dbReference type="Gene3D" id="3.40.1380.10">
    <property type="match status" value="1"/>
</dbReference>
<dbReference type="Gene3D" id="1.10.287.80">
    <property type="entry name" value="ATP synthase, gamma subunit, helix hairpin domain"/>
    <property type="match status" value="1"/>
</dbReference>
<dbReference type="HAMAP" id="MF_00815">
    <property type="entry name" value="ATP_synth_gamma_bact"/>
    <property type="match status" value="1"/>
</dbReference>
<dbReference type="InterPro" id="IPR035968">
    <property type="entry name" value="ATP_synth_F1_ATPase_gsu"/>
</dbReference>
<dbReference type="InterPro" id="IPR000131">
    <property type="entry name" value="ATP_synth_F1_gsu"/>
</dbReference>
<dbReference type="InterPro" id="IPR023632">
    <property type="entry name" value="ATP_synth_F1_gsu_CS"/>
</dbReference>
<dbReference type="NCBIfam" id="TIGR01146">
    <property type="entry name" value="ATPsyn_F1gamma"/>
    <property type="match status" value="1"/>
</dbReference>
<dbReference type="NCBIfam" id="NF004146">
    <property type="entry name" value="PRK05621.1-4"/>
    <property type="match status" value="1"/>
</dbReference>
<dbReference type="PANTHER" id="PTHR11693">
    <property type="entry name" value="ATP SYNTHASE GAMMA CHAIN"/>
    <property type="match status" value="1"/>
</dbReference>
<dbReference type="PANTHER" id="PTHR11693:SF22">
    <property type="entry name" value="ATP SYNTHASE SUBUNIT GAMMA, MITOCHONDRIAL"/>
    <property type="match status" value="1"/>
</dbReference>
<dbReference type="Pfam" id="PF00231">
    <property type="entry name" value="ATP-synt"/>
    <property type="match status" value="1"/>
</dbReference>
<dbReference type="PIRSF" id="PIRSF039089">
    <property type="entry name" value="ATP_synthase_gamma"/>
    <property type="match status" value="1"/>
</dbReference>
<dbReference type="PRINTS" id="PR00126">
    <property type="entry name" value="ATPASEGAMMA"/>
</dbReference>
<dbReference type="SUPFAM" id="SSF52943">
    <property type="entry name" value="ATP synthase (F1-ATPase), gamma subunit"/>
    <property type="match status" value="1"/>
</dbReference>
<dbReference type="PROSITE" id="PS00153">
    <property type="entry name" value="ATPASE_GAMMA"/>
    <property type="match status" value="1"/>
</dbReference>
<accession>Q5LNP0</accession>
<evidence type="ECO:0000255" key="1">
    <source>
        <dbReference type="HAMAP-Rule" id="MF_00815"/>
    </source>
</evidence>
<name>ATPG_RUEPO</name>
<protein>
    <recommendedName>
        <fullName evidence="1">ATP synthase gamma chain</fullName>
    </recommendedName>
    <alternativeName>
        <fullName evidence="1">ATP synthase F1 sector gamma subunit</fullName>
    </alternativeName>
    <alternativeName>
        <fullName evidence="1">F-ATPase gamma subunit</fullName>
    </alternativeName>
</protein>
<feature type="chain" id="PRO_0000073371" description="ATP synthase gamma chain">
    <location>
        <begin position="1"/>
        <end position="291"/>
    </location>
</feature>
<reference key="1">
    <citation type="journal article" date="2004" name="Nature">
        <title>Genome sequence of Silicibacter pomeroyi reveals adaptations to the marine environment.</title>
        <authorList>
            <person name="Moran M.A."/>
            <person name="Buchan A."/>
            <person name="Gonzalez J.M."/>
            <person name="Heidelberg J.F."/>
            <person name="Whitman W.B."/>
            <person name="Kiene R.P."/>
            <person name="Henriksen J.R."/>
            <person name="King G.M."/>
            <person name="Belas R."/>
            <person name="Fuqua C."/>
            <person name="Brinkac L.M."/>
            <person name="Lewis M."/>
            <person name="Johri S."/>
            <person name="Weaver B."/>
            <person name="Pai G."/>
            <person name="Eisen J.A."/>
            <person name="Rahe E."/>
            <person name="Sheldon W.M."/>
            <person name="Ye W."/>
            <person name="Miller T.R."/>
            <person name="Carlton J."/>
            <person name="Rasko D.A."/>
            <person name="Paulsen I.T."/>
            <person name="Ren Q."/>
            <person name="Daugherty S.C."/>
            <person name="DeBoy R.T."/>
            <person name="Dodson R.J."/>
            <person name="Durkin A.S."/>
            <person name="Madupu R."/>
            <person name="Nelson W.C."/>
            <person name="Sullivan S.A."/>
            <person name="Rosovitz M.J."/>
            <person name="Haft D.H."/>
            <person name="Selengut J."/>
            <person name="Ward N."/>
        </authorList>
    </citation>
    <scope>NUCLEOTIDE SEQUENCE [LARGE SCALE GENOMIC DNA]</scope>
    <source>
        <strain>ATCC 700808 / DSM 15171 / DSS-3</strain>
    </source>
</reference>
<reference key="2">
    <citation type="journal article" date="2014" name="Stand. Genomic Sci.">
        <title>An updated genome annotation for the model marine bacterium Ruegeria pomeroyi DSS-3.</title>
        <authorList>
            <person name="Rivers A.R."/>
            <person name="Smith C.B."/>
            <person name="Moran M.A."/>
        </authorList>
    </citation>
    <scope>GENOME REANNOTATION</scope>
    <source>
        <strain>ATCC 700808 / DSM 15171 / DSS-3</strain>
    </source>
</reference>